<gene>
    <name type="primary">copA</name>
    <name type="ordered locus">SH0496</name>
</gene>
<protein>
    <recommendedName>
        <fullName>Copper-exporting P-type ATPase</fullName>
        <ecNumber>7.2.2.8</ecNumber>
    </recommendedName>
    <alternativeName>
        <fullName>Copper-exporting P-type ATPase A</fullName>
    </alternativeName>
    <alternativeName>
        <fullName>Cu(+)-exporting ATPase</fullName>
    </alternativeName>
</protein>
<proteinExistence type="inferred from homology"/>
<accession>Q4L970</accession>
<comment type="function">
    <text evidence="1">Involved in copper export.</text>
</comment>
<comment type="catalytic activity">
    <reaction>
        <text>Cu(+)(in) + ATP + H2O = Cu(+)(out) + ADP + phosphate + H(+)</text>
        <dbReference type="Rhea" id="RHEA:25792"/>
        <dbReference type="ChEBI" id="CHEBI:15377"/>
        <dbReference type="ChEBI" id="CHEBI:15378"/>
        <dbReference type="ChEBI" id="CHEBI:30616"/>
        <dbReference type="ChEBI" id="CHEBI:43474"/>
        <dbReference type="ChEBI" id="CHEBI:49552"/>
        <dbReference type="ChEBI" id="CHEBI:456216"/>
        <dbReference type="EC" id="7.2.2.8"/>
    </reaction>
</comment>
<comment type="subcellular location">
    <subcellularLocation>
        <location evidence="1">Cell membrane</location>
        <topology evidence="1">Multi-pass membrane protein</topology>
    </subcellularLocation>
</comment>
<comment type="similarity">
    <text evidence="4">Belongs to the cation transport ATPase (P-type) (TC 3.A.3) family. Type IB subfamily.</text>
</comment>
<name>COPA_STAHJ</name>
<dbReference type="EC" id="7.2.2.8"/>
<dbReference type="EMBL" id="AP006716">
    <property type="protein sequence ID" value="BAE03805.1"/>
    <property type="molecule type" value="Genomic_DNA"/>
</dbReference>
<dbReference type="RefSeq" id="WP_011274821.1">
    <property type="nucleotide sequence ID" value="NC_007168.1"/>
</dbReference>
<dbReference type="SMR" id="Q4L970"/>
<dbReference type="KEGG" id="sha:SH0496"/>
<dbReference type="eggNOG" id="COG2217">
    <property type="taxonomic scope" value="Bacteria"/>
</dbReference>
<dbReference type="HOGENOM" id="CLU_001771_0_3_9"/>
<dbReference type="OrthoDB" id="9813266at2"/>
<dbReference type="Proteomes" id="UP000000543">
    <property type="component" value="Chromosome"/>
</dbReference>
<dbReference type="GO" id="GO:0005886">
    <property type="term" value="C:plasma membrane"/>
    <property type="evidence" value="ECO:0007669"/>
    <property type="project" value="UniProtKB-SubCell"/>
</dbReference>
<dbReference type="GO" id="GO:0005524">
    <property type="term" value="F:ATP binding"/>
    <property type="evidence" value="ECO:0007669"/>
    <property type="project" value="UniProtKB-KW"/>
</dbReference>
<dbReference type="GO" id="GO:0016887">
    <property type="term" value="F:ATP hydrolysis activity"/>
    <property type="evidence" value="ECO:0007669"/>
    <property type="project" value="InterPro"/>
</dbReference>
<dbReference type="GO" id="GO:0005507">
    <property type="term" value="F:copper ion binding"/>
    <property type="evidence" value="ECO:0007669"/>
    <property type="project" value="InterPro"/>
</dbReference>
<dbReference type="GO" id="GO:0043682">
    <property type="term" value="F:P-type divalent copper transporter activity"/>
    <property type="evidence" value="ECO:0007669"/>
    <property type="project" value="TreeGrafter"/>
</dbReference>
<dbReference type="GO" id="GO:0140581">
    <property type="term" value="F:P-type monovalent copper transporter activity"/>
    <property type="evidence" value="ECO:0007669"/>
    <property type="project" value="UniProtKB-EC"/>
</dbReference>
<dbReference type="GO" id="GO:0055070">
    <property type="term" value="P:copper ion homeostasis"/>
    <property type="evidence" value="ECO:0007669"/>
    <property type="project" value="TreeGrafter"/>
</dbReference>
<dbReference type="CDD" id="cd00371">
    <property type="entry name" value="HMA"/>
    <property type="match status" value="2"/>
</dbReference>
<dbReference type="CDD" id="cd02094">
    <property type="entry name" value="P-type_ATPase_Cu-like"/>
    <property type="match status" value="1"/>
</dbReference>
<dbReference type="FunFam" id="3.30.70.100:FF:000005">
    <property type="entry name" value="Copper-exporting P-type ATPase A"/>
    <property type="match status" value="2"/>
</dbReference>
<dbReference type="FunFam" id="3.40.50.1000:FF:000144">
    <property type="entry name" value="copper-transporting ATPase 1 isoform X2"/>
    <property type="match status" value="1"/>
</dbReference>
<dbReference type="FunFam" id="2.70.150.10:FF:000002">
    <property type="entry name" value="Copper-transporting ATPase 1, putative"/>
    <property type="match status" value="1"/>
</dbReference>
<dbReference type="Gene3D" id="3.30.70.100">
    <property type="match status" value="2"/>
</dbReference>
<dbReference type="Gene3D" id="3.40.1110.10">
    <property type="entry name" value="Calcium-transporting ATPase, cytoplasmic domain N"/>
    <property type="match status" value="1"/>
</dbReference>
<dbReference type="Gene3D" id="2.70.150.10">
    <property type="entry name" value="Calcium-transporting ATPase, cytoplasmic transduction domain A"/>
    <property type="match status" value="1"/>
</dbReference>
<dbReference type="Gene3D" id="3.40.50.1000">
    <property type="entry name" value="HAD superfamily/HAD-like"/>
    <property type="match status" value="1"/>
</dbReference>
<dbReference type="InterPro" id="IPR023299">
    <property type="entry name" value="ATPase_P-typ_cyto_dom_N"/>
</dbReference>
<dbReference type="InterPro" id="IPR018303">
    <property type="entry name" value="ATPase_P-typ_P_site"/>
</dbReference>
<dbReference type="InterPro" id="IPR023298">
    <property type="entry name" value="ATPase_P-typ_TM_dom_sf"/>
</dbReference>
<dbReference type="InterPro" id="IPR008250">
    <property type="entry name" value="ATPase_P-typ_transduc_dom_A_sf"/>
</dbReference>
<dbReference type="InterPro" id="IPR036412">
    <property type="entry name" value="HAD-like_sf"/>
</dbReference>
<dbReference type="InterPro" id="IPR023214">
    <property type="entry name" value="HAD_sf"/>
</dbReference>
<dbReference type="InterPro" id="IPR017969">
    <property type="entry name" value="Heavy-metal-associated_CS"/>
</dbReference>
<dbReference type="InterPro" id="IPR006122">
    <property type="entry name" value="HMA_Cu_ion-bd"/>
</dbReference>
<dbReference type="InterPro" id="IPR006121">
    <property type="entry name" value="HMA_dom"/>
</dbReference>
<dbReference type="InterPro" id="IPR036163">
    <property type="entry name" value="HMA_dom_sf"/>
</dbReference>
<dbReference type="InterPro" id="IPR027256">
    <property type="entry name" value="P-typ_ATPase_IB"/>
</dbReference>
<dbReference type="InterPro" id="IPR001757">
    <property type="entry name" value="P_typ_ATPase"/>
</dbReference>
<dbReference type="InterPro" id="IPR044492">
    <property type="entry name" value="P_typ_ATPase_HD_dom"/>
</dbReference>
<dbReference type="NCBIfam" id="TIGR01511">
    <property type="entry name" value="ATPase-IB1_Cu"/>
    <property type="match status" value="1"/>
</dbReference>
<dbReference type="NCBIfam" id="TIGR01525">
    <property type="entry name" value="ATPase-IB_hvy"/>
    <property type="match status" value="1"/>
</dbReference>
<dbReference type="NCBIfam" id="TIGR01494">
    <property type="entry name" value="ATPase_P-type"/>
    <property type="match status" value="1"/>
</dbReference>
<dbReference type="NCBIfam" id="TIGR00003">
    <property type="entry name" value="copper ion binding protein"/>
    <property type="match status" value="1"/>
</dbReference>
<dbReference type="PANTHER" id="PTHR43520">
    <property type="entry name" value="ATP7, ISOFORM B"/>
    <property type="match status" value="1"/>
</dbReference>
<dbReference type="PANTHER" id="PTHR43520:SF8">
    <property type="entry name" value="P-TYPE CU(+) TRANSPORTER"/>
    <property type="match status" value="1"/>
</dbReference>
<dbReference type="Pfam" id="PF00122">
    <property type="entry name" value="E1-E2_ATPase"/>
    <property type="match status" value="1"/>
</dbReference>
<dbReference type="Pfam" id="PF00403">
    <property type="entry name" value="HMA"/>
    <property type="match status" value="2"/>
</dbReference>
<dbReference type="Pfam" id="PF00702">
    <property type="entry name" value="Hydrolase"/>
    <property type="match status" value="1"/>
</dbReference>
<dbReference type="PRINTS" id="PR00119">
    <property type="entry name" value="CATATPASE"/>
</dbReference>
<dbReference type="PRINTS" id="PR00941">
    <property type="entry name" value="CDATPASE"/>
</dbReference>
<dbReference type="SFLD" id="SFLDS00003">
    <property type="entry name" value="Haloacid_Dehalogenase"/>
    <property type="match status" value="1"/>
</dbReference>
<dbReference type="SFLD" id="SFLDF00027">
    <property type="entry name" value="p-type_atpase"/>
    <property type="match status" value="1"/>
</dbReference>
<dbReference type="SUPFAM" id="SSF81653">
    <property type="entry name" value="Calcium ATPase, transduction domain A"/>
    <property type="match status" value="1"/>
</dbReference>
<dbReference type="SUPFAM" id="SSF81665">
    <property type="entry name" value="Calcium ATPase, transmembrane domain M"/>
    <property type="match status" value="1"/>
</dbReference>
<dbReference type="SUPFAM" id="SSF56784">
    <property type="entry name" value="HAD-like"/>
    <property type="match status" value="1"/>
</dbReference>
<dbReference type="SUPFAM" id="SSF55008">
    <property type="entry name" value="HMA, heavy metal-associated domain"/>
    <property type="match status" value="2"/>
</dbReference>
<dbReference type="PROSITE" id="PS00154">
    <property type="entry name" value="ATPASE_E1_E2"/>
    <property type="match status" value="1"/>
</dbReference>
<dbReference type="PROSITE" id="PS01047">
    <property type="entry name" value="HMA_1"/>
    <property type="match status" value="2"/>
</dbReference>
<dbReference type="PROSITE" id="PS50846">
    <property type="entry name" value="HMA_2"/>
    <property type="match status" value="2"/>
</dbReference>
<keyword id="KW-0067">ATP-binding</keyword>
<keyword id="KW-1003">Cell membrane</keyword>
<keyword id="KW-0186">Copper</keyword>
<keyword id="KW-0187">Copper transport</keyword>
<keyword id="KW-0406">Ion transport</keyword>
<keyword id="KW-0460">Magnesium</keyword>
<keyword id="KW-0472">Membrane</keyword>
<keyword id="KW-0479">Metal-binding</keyword>
<keyword id="KW-0547">Nucleotide-binding</keyword>
<keyword id="KW-0597">Phosphoprotein</keyword>
<keyword id="KW-0677">Repeat</keyword>
<keyword id="KW-1278">Translocase</keyword>
<keyword id="KW-0812">Transmembrane</keyword>
<keyword id="KW-1133">Transmembrane helix</keyword>
<keyword id="KW-0813">Transport</keyword>
<evidence type="ECO:0000250" key="1"/>
<evidence type="ECO:0000255" key="2"/>
<evidence type="ECO:0000255" key="3">
    <source>
        <dbReference type="PROSITE-ProRule" id="PRU00280"/>
    </source>
</evidence>
<evidence type="ECO:0000305" key="4"/>
<organism>
    <name type="scientific">Staphylococcus haemolyticus (strain JCSC1435)</name>
    <dbReference type="NCBI Taxonomy" id="279808"/>
    <lineage>
        <taxon>Bacteria</taxon>
        <taxon>Bacillati</taxon>
        <taxon>Bacillota</taxon>
        <taxon>Bacilli</taxon>
        <taxon>Bacillales</taxon>
        <taxon>Staphylococcaceae</taxon>
        <taxon>Staphylococcus</taxon>
    </lineage>
</organism>
<reference key="1">
    <citation type="journal article" date="2005" name="J. Bacteriol.">
        <title>Whole-genome sequencing of Staphylococcus haemolyticus uncovers the extreme plasticity of its genome and the evolution of human-colonizing staphylococcal species.</title>
        <authorList>
            <person name="Takeuchi F."/>
            <person name="Watanabe S."/>
            <person name="Baba T."/>
            <person name="Yuzawa H."/>
            <person name="Ito T."/>
            <person name="Morimoto Y."/>
            <person name="Kuroda M."/>
            <person name="Cui L."/>
            <person name="Takahashi M."/>
            <person name="Ankai A."/>
            <person name="Baba S."/>
            <person name="Fukui S."/>
            <person name="Lee J.C."/>
            <person name="Hiramatsu K."/>
        </authorList>
    </citation>
    <scope>NUCLEOTIDE SEQUENCE [LARGE SCALE GENOMIC DNA]</scope>
    <source>
        <strain>JCSC1435</strain>
    </source>
</reference>
<feature type="chain" id="PRO_0000350599" description="Copper-exporting P-type ATPase">
    <location>
        <begin position="1"/>
        <end position="795"/>
    </location>
</feature>
<feature type="transmembrane region" description="Helical" evidence="2">
    <location>
        <begin position="161"/>
        <end position="181"/>
    </location>
</feature>
<feature type="transmembrane region" description="Helical" evidence="2">
    <location>
        <begin position="187"/>
        <end position="207"/>
    </location>
</feature>
<feature type="transmembrane region" description="Helical" evidence="2">
    <location>
        <begin position="224"/>
        <end position="244"/>
    </location>
</feature>
<feature type="transmembrane region" description="Helical" evidence="2">
    <location>
        <begin position="256"/>
        <end position="276"/>
    </location>
</feature>
<feature type="transmembrane region" description="Helical" evidence="2">
    <location>
        <begin position="412"/>
        <end position="432"/>
    </location>
</feature>
<feature type="transmembrane region" description="Helical" evidence="2">
    <location>
        <begin position="440"/>
        <end position="460"/>
    </location>
</feature>
<feature type="transmembrane region" description="Helical" evidence="2">
    <location>
        <begin position="747"/>
        <end position="764"/>
    </location>
</feature>
<feature type="transmembrane region" description="Helical" evidence="2">
    <location>
        <begin position="770"/>
        <end position="788"/>
    </location>
</feature>
<feature type="domain" description="HMA 1" evidence="3">
    <location>
        <begin position="5"/>
        <end position="70"/>
    </location>
</feature>
<feature type="domain" description="HMA 2" evidence="3">
    <location>
        <begin position="72"/>
        <end position="138"/>
    </location>
</feature>
<feature type="active site" description="4-aspartylphosphate intermediate" evidence="1">
    <location>
        <position position="496"/>
    </location>
</feature>
<feature type="binding site" evidence="3">
    <location>
        <position position="16"/>
    </location>
    <ligand>
        <name>Cu(+)</name>
        <dbReference type="ChEBI" id="CHEBI:49552"/>
        <label>1</label>
    </ligand>
</feature>
<feature type="binding site" evidence="3">
    <location>
        <position position="19"/>
    </location>
    <ligand>
        <name>Cu(+)</name>
        <dbReference type="ChEBI" id="CHEBI:49552"/>
        <label>1</label>
    </ligand>
</feature>
<feature type="binding site" evidence="3">
    <location>
        <position position="83"/>
    </location>
    <ligand>
        <name>Cu(+)</name>
        <dbReference type="ChEBI" id="CHEBI:49552"/>
        <label>2</label>
    </ligand>
</feature>
<feature type="binding site" evidence="3">
    <location>
        <position position="86"/>
    </location>
    <ligand>
        <name>Cu(+)</name>
        <dbReference type="ChEBI" id="CHEBI:49552"/>
        <label>2</label>
    </ligand>
</feature>
<feature type="binding site">
    <location>
        <position position="690"/>
    </location>
    <ligand>
        <name>Mg(2+)</name>
        <dbReference type="ChEBI" id="CHEBI:18420"/>
    </ligand>
</feature>
<feature type="binding site">
    <location>
        <position position="694"/>
    </location>
    <ligand>
        <name>Mg(2+)</name>
        <dbReference type="ChEBI" id="CHEBI:18420"/>
    </ligand>
</feature>
<sequence>MSNKQNATLNITGMTCAACSNRIEKRLNKMDNVKAQVNLTTEKATIEYDTNDYAINDFVTTVQKLGYDVVIDKAELDITGMTCAACSNRIEKVLNKAPGVKDATVNLTTEQAMVTYYPGQTDLDTLIGRIRNLGYDAQPKQSEEDQATRKQQELKHKRNKLMISTILSLPLLMTMLVHLFNMHLPDILMNPWFQFILATPIQFIIGWQFYVGAYKNLRNGGFNMDVLVALGTSAAYFYSIYEMIKWFSGATNMPHLYFETSAVLITLILFGKYLEARAKSQTTNALSELLNLQAKEARLIDDNGMEKMVPLNQVNVDDILLIKPGEKIPVDGQIIKGETAIDESMLTGESMPVDKHVDDVVIGSTMNTNGVITIMATKVGKDTALSNIIKVVEEAQSSKAPIQRLADIISGYFVPIVIAIALLTFLIWITLVHPGQFEDALVAAISVLVIACPCALGLATPTSIMVGTGRAAENGILFKGGEYVERTHQVDTVVFDKTGTLTHGKPEVTYFEGDKDTLTLVASAENNSEHPLATAIVNYAKQHKVNLVNVTNYQTLPGHGIQAIIDDSMLFVGNQKLMLDHQINIQSIKQKMKQMEAEGHTVMLIAYDGKLRGMIAVADTVKASAKEAIQQLSSMNIRTVMLTGDNERTAKAIAKEVGIDQVIAGVLPEDKAHHITQLQEQKHNVAMVGDGINDAPALVKADIGIAMGTGTEVAIEAADITILGGDIQLVPKAIHASHKTIRNIKQNLFWAFGYNIAGIPIAAMGLLAPWIAGAAMALSSVSVVSNALRLKRMKL</sequence>